<gene>
    <name evidence="1" type="primary">lepA</name>
    <name type="ordered locus">SPs0938</name>
</gene>
<reference key="1">
    <citation type="journal article" date="2003" name="Genome Res.">
        <title>Genome sequence of an M3 strain of Streptococcus pyogenes reveals a large-scale genomic rearrangement in invasive strains and new insights into phage evolution.</title>
        <authorList>
            <person name="Nakagawa I."/>
            <person name="Kurokawa K."/>
            <person name="Yamashita A."/>
            <person name="Nakata M."/>
            <person name="Tomiyasu Y."/>
            <person name="Okahashi N."/>
            <person name="Kawabata S."/>
            <person name="Yamazaki K."/>
            <person name="Shiba T."/>
            <person name="Yasunaga T."/>
            <person name="Hayashi H."/>
            <person name="Hattori M."/>
            <person name="Hamada S."/>
        </authorList>
    </citation>
    <scope>NUCLEOTIDE SEQUENCE [LARGE SCALE GENOMIC DNA]</scope>
    <source>
        <strain>SSI-1</strain>
    </source>
</reference>
<accession>P0DC23</accession>
<accession>Q8K7M8</accession>
<dbReference type="EC" id="3.6.5.n1" evidence="1"/>
<dbReference type="EMBL" id="BA000034">
    <property type="protein sequence ID" value="BAC64033.1"/>
    <property type="molecule type" value="Genomic_DNA"/>
</dbReference>
<dbReference type="RefSeq" id="WP_011054451.1">
    <property type="nucleotide sequence ID" value="NC_004606.1"/>
</dbReference>
<dbReference type="SMR" id="P0DC23"/>
<dbReference type="KEGG" id="sps:SPs0938"/>
<dbReference type="HOGENOM" id="CLU_009995_3_3_9"/>
<dbReference type="GO" id="GO:0005886">
    <property type="term" value="C:plasma membrane"/>
    <property type="evidence" value="ECO:0007669"/>
    <property type="project" value="UniProtKB-SubCell"/>
</dbReference>
<dbReference type="GO" id="GO:0005525">
    <property type="term" value="F:GTP binding"/>
    <property type="evidence" value="ECO:0007669"/>
    <property type="project" value="UniProtKB-UniRule"/>
</dbReference>
<dbReference type="GO" id="GO:0003924">
    <property type="term" value="F:GTPase activity"/>
    <property type="evidence" value="ECO:0007669"/>
    <property type="project" value="UniProtKB-UniRule"/>
</dbReference>
<dbReference type="GO" id="GO:0043022">
    <property type="term" value="F:ribosome binding"/>
    <property type="evidence" value="ECO:0007669"/>
    <property type="project" value="UniProtKB-UniRule"/>
</dbReference>
<dbReference type="GO" id="GO:0003746">
    <property type="term" value="F:translation elongation factor activity"/>
    <property type="evidence" value="ECO:0007669"/>
    <property type="project" value="UniProtKB-UniRule"/>
</dbReference>
<dbReference type="GO" id="GO:0045727">
    <property type="term" value="P:positive regulation of translation"/>
    <property type="evidence" value="ECO:0007669"/>
    <property type="project" value="UniProtKB-UniRule"/>
</dbReference>
<dbReference type="CDD" id="cd03699">
    <property type="entry name" value="EF4_II"/>
    <property type="match status" value="1"/>
</dbReference>
<dbReference type="CDD" id="cd16260">
    <property type="entry name" value="EF4_III"/>
    <property type="match status" value="1"/>
</dbReference>
<dbReference type="CDD" id="cd01890">
    <property type="entry name" value="LepA"/>
    <property type="match status" value="1"/>
</dbReference>
<dbReference type="CDD" id="cd03709">
    <property type="entry name" value="lepA_C"/>
    <property type="match status" value="1"/>
</dbReference>
<dbReference type="FunFam" id="3.40.50.300:FF:000078">
    <property type="entry name" value="Elongation factor 4"/>
    <property type="match status" value="1"/>
</dbReference>
<dbReference type="FunFam" id="2.40.30.10:FF:000015">
    <property type="entry name" value="Translation factor GUF1, mitochondrial"/>
    <property type="match status" value="1"/>
</dbReference>
<dbReference type="FunFam" id="3.30.70.240:FF:000007">
    <property type="entry name" value="Translation factor GUF1, mitochondrial"/>
    <property type="match status" value="1"/>
</dbReference>
<dbReference type="FunFam" id="3.30.70.2570:FF:000001">
    <property type="entry name" value="Translation factor GUF1, mitochondrial"/>
    <property type="match status" value="1"/>
</dbReference>
<dbReference type="FunFam" id="3.30.70.870:FF:000004">
    <property type="entry name" value="Translation factor GUF1, mitochondrial"/>
    <property type="match status" value="1"/>
</dbReference>
<dbReference type="Gene3D" id="3.30.70.240">
    <property type="match status" value="1"/>
</dbReference>
<dbReference type="Gene3D" id="3.30.70.2570">
    <property type="entry name" value="Elongation factor 4, C-terminal domain"/>
    <property type="match status" value="1"/>
</dbReference>
<dbReference type="Gene3D" id="3.30.70.870">
    <property type="entry name" value="Elongation Factor G (Translational Gtpase), domain 3"/>
    <property type="match status" value="1"/>
</dbReference>
<dbReference type="Gene3D" id="3.40.50.300">
    <property type="entry name" value="P-loop containing nucleotide triphosphate hydrolases"/>
    <property type="match status" value="1"/>
</dbReference>
<dbReference type="Gene3D" id="2.40.30.10">
    <property type="entry name" value="Translation factors"/>
    <property type="match status" value="1"/>
</dbReference>
<dbReference type="HAMAP" id="MF_00071">
    <property type="entry name" value="LepA"/>
    <property type="match status" value="1"/>
</dbReference>
<dbReference type="InterPro" id="IPR006297">
    <property type="entry name" value="EF-4"/>
</dbReference>
<dbReference type="InterPro" id="IPR041095">
    <property type="entry name" value="EFG_II"/>
</dbReference>
<dbReference type="InterPro" id="IPR035647">
    <property type="entry name" value="EFG_III/V"/>
</dbReference>
<dbReference type="InterPro" id="IPR000640">
    <property type="entry name" value="EFG_V-like"/>
</dbReference>
<dbReference type="InterPro" id="IPR004161">
    <property type="entry name" value="EFTu-like_2"/>
</dbReference>
<dbReference type="InterPro" id="IPR031157">
    <property type="entry name" value="G_TR_CS"/>
</dbReference>
<dbReference type="InterPro" id="IPR038363">
    <property type="entry name" value="LepA_C_sf"/>
</dbReference>
<dbReference type="InterPro" id="IPR013842">
    <property type="entry name" value="LepA_CTD"/>
</dbReference>
<dbReference type="InterPro" id="IPR035654">
    <property type="entry name" value="LepA_IV"/>
</dbReference>
<dbReference type="InterPro" id="IPR027417">
    <property type="entry name" value="P-loop_NTPase"/>
</dbReference>
<dbReference type="InterPro" id="IPR005225">
    <property type="entry name" value="Small_GTP-bd"/>
</dbReference>
<dbReference type="InterPro" id="IPR000795">
    <property type="entry name" value="T_Tr_GTP-bd_dom"/>
</dbReference>
<dbReference type="InterPro" id="IPR009000">
    <property type="entry name" value="Transl_B-barrel_sf"/>
</dbReference>
<dbReference type="NCBIfam" id="TIGR01393">
    <property type="entry name" value="lepA"/>
    <property type="match status" value="1"/>
</dbReference>
<dbReference type="NCBIfam" id="TIGR00231">
    <property type="entry name" value="small_GTP"/>
    <property type="match status" value="1"/>
</dbReference>
<dbReference type="PANTHER" id="PTHR43512:SF4">
    <property type="entry name" value="TRANSLATION FACTOR GUF1 HOMOLOG, CHLOROPLASTIC"/>
    <property type="match status" value="1"/>
</dbReference>
<dbReference type="PANTHER" id="PTHR43512">
    <property type="entry name" value="TRANSLATION FACTOR GUF1-RELATED"/>
    <property type="match status" value="1"/>
</dbReference>
<dbReference type="Pfam" id="PF00679">
    <property type="entry name" value="EFG_C"/>
    <property type="match status" value="1"/>
</dbReference>
<dbReference type="Pfam" id="PF14492">
    <property type="entry name" value="EFG_III"/>
    <property type="match status" value="1"/>
</dbReference>
<dbReference type="Pfam" id="PF00009">
    <property type="entry name" value="GTP_EFTU"/>
    <property type="match status" value="1"/>
</dbReference>
<dbReference type="Pfam" id="PF03144">
    <property type="entry name" value="GTP_EFTU_D2"/>
    <property type="match status" value="1"/>
</dbReference>
<dbReference type="Pfam" id="PF06421">
    <property type="entry name" value="LepA_C"/>
    <property type="match status" value="1"/>
</dbReference>
<dbReference type="PRINTS" id="PR00315">
    <property type="entry name" value="ELONGATNFCT"/>
</dbReference>
<dbReference type="SMART" id="SM00838">
    <property type="entry name" value="EFG_C"/>
    <property type="match status" value="1"/>
</dbReference>
<dbReference type="SUPFAM" id="SSF54980">
    <property type="entry name" value="EF-G C-terminal domain-like"/>
    <property type="match status" value="2"/>
</dbReference>
<dbReference type="SUPFAM" id="SSF52540">
    <property type="entry name" value="P-loop containing nucleoside triphosphate hydrolases"/>
    <property type="match status" value="1"/>
</dbReference>
<dbReference type="SUPFAM" id="SSF50447">
    <property type="entry name" value="Translation proteins"/>
    <property type="match status" value="1"/>
</dbReference>
<dbReference type="PROSITE" id="PS00301">
    <property type="entry name" value="G_TR_1"/>
    <property type="match status" value="1"/>
</dbReference>
<dbReference type="PROSITE" id="PS51722">
    <property type="entry name" value="G_TR_2"/>
    <property type="match status" value="1"/>
</dbReference>
<keyword id="KW-1003">Cell membrane</keyword>
<keyword id="KW-0342">GTP-binding</keyword>
<keyword id="KW-0378">Hydrolase</keyword>
<keyword id="KW-0472">Membrane</keyword>
<keyword id="KW-0547">Nucleotide-binding</keyword>
<keyword id="KW-0648">Protein biosynthesis</keyword>
<organism>
    <name type="scientific">Streptococcus pyogenes serotype M3 (strain SSI-1)</name>
    <dbReference type="NCBI Taxonomy" id="193567"/>
    <lineage>
        <taxon>Bacteria</taxon>
        <taxon>Bacillati</taxon>
        <taxon>Bacillota</taxon>
        <taxon>Bacilli</taxon>
        <taxon>Lactobacillales</taxon>
        <taxon>Streptococcaceae</taxon>
        <taxon>Streptococcus</taxon>
    </lineage>
</organism>
<proteinExistence type="inferred from homology"/>
<name>LEPA_STRPQ</name>
<feature type="chain" id="PRO_0000411399" description="Elongation factor 4">
    <location>
        <begin position="1"/>
        <end position="610"/>
    </location>
</feature>
<feature type="domain" description="tr-type G">
    <location>
        <begin position="11"/>
        <end position="193"/>
    </location>
</feature>
<feature type="binding site" evidence="1">
    <location>
        <begin position="23"/>
        <end position="28"/>
    </location>
    <ligand>
        <name>GTP</name>
        <dbReference type="ChEBI" id="CHEBI:37565"/>
    </ligand>
</feature>
<feature type="binding site" evidence="1">
    <location>
        <begin position="140"/>
        <end position="143"/>
    </location>
    <ligand>
        <name>GTP</name>
        <dbReference type="ChEBI" id="CHEBI:37565"/>
    </ligand>
</feature>
<protein>
    <recommendedName>
        <fullName evidence="1">Elongation factor 4</fullName>
        <shortName evidence="1">EF-4</shortName>
        <ecNumber evidence="1">3.6.5.n1</ecNumber>
    </recommendedName>
    <alternativeName>
        <fullName evidence="1">Ribosomal back-translocase LepA</fullName>
    </alternativeName>
</protein>
<sequence>MNSQDLKKRQEKIRNFSIIAHIDHGKSTLADRILEKTETVSSREMQAQLLDSMDLERERGITIKLNAIELNYTARDGETYIFHLIDTPGHVDFTYEVSRSLAACEGAILVVDAAQGIEAQTLANVYLALDNDLEILPVINKIDLPAADPERVCHEVEDVIGLDASEAVLASAKAGIGIEEILEQIVEKVPAPTGDVDAPLQALIFDSVYDAYRGVILQVRIVNGIVKPGDKIQMMSNGKTFDVTEVGIFTPKAVGRDFLATGDVGYVAASIKTVADTRVGDTVTLANNPAKEALHGYKQMNPMVFAGIYPIESNKYNDLREALEKLQLNDASLQFEPETSQALGFGFRCGFLGLLHMDVIQERLEREFNIDLIMTAPSVVYHVHTTDEDMIEVSNPSEFPDPTRVAFIEEPYVKAQIMVPQEFVGAVMELSQRKRGDFVTMDYIDDNRVNVIYQIPLAEIVFDFFDKLKSSTRGYASFDYDMSEYRRSQLVKMDILLNGDKVDALSFIVHKEFAYERGKIIVEKLKKIIPRQQFEVPIQAAIGQKIVARSDIKALRKNVLAKCYGGDVSRKRKLLEKQKAGKKRMKAIGSVEVPQEAFLSVLSMDDDAKK</sequence>
<evidence type="ECO:0000255" key="1">
    <source>
        <dbReference type="HAMAP-Rule" id="MF_00071"/>
    </source>
</evidence>
<comment type="function">
    <text evidence="1">Required for accurate and efficient protein synthesis under certain stress conditions. May act as a fidelity factor of the translation reaction, by catalyzing a one-codon backward translocation of tRNAs on improperly translocated ribosomes. Back-translocation proceeds from a post-translocation (POST) complex to a pre-translocation (PRE) complex, thus giving elongation factor G a second chance to translocate the tRNAs correctly. Binds to ribosomes in a GTP-dependent manner.</text>
</comment>
<comment type="catalytic activity">
    <reaction evidence="1">
        <text>GTP + H2O = GDP + phosphate + H(+)</text>
        <dbReference type="Rhea" id="RHEA:19669"/>
        <dbReference type="ChEBI" id="CHEBI:15377"/>
        <dbReference type="ChEBI" id="CHEBI:15378"/>
        <dbReference type="ChEBI" id="CHEBI:37565"/>
        <dbReference type="ChEBI" id="CHEBI:43474"/>
        <dbReference type="ChEBI" id="CHEBI:58189"/>
        <dbReference type="EC" id="3.6.5.n1"/>
    </reaction>
</comment>
<comment type="subcellular location">
    <subcellularLocation>
        <location evidence="1">Cell membrane</location>
        <topology evidence="1">Peripheral membrane protein</topology>
        <orientation evidence="1">Cytoplasmic side</orientation>
    </subcellularLocation>
</comment>
<comment type="similarity">
    <text evidence="1">Belongs to the TRAFAC class translation factor GTPase superfamily. Classic translation factor GTPase family. LepA subfamily.</text>
</comment>